<dbReference type="EC" id="3.1.27.-" evidence="1"/>
<dbReference type="EMBL" id="BC121666">
    <property type="protein sequence ID" value="AAI21667.1"/>
    <property type="molecule type" value="mRNA"/>
</dbReference>
<dbReference type="RefSeq" id="NP_001072425.1">
    <property type="nucleotide sequence ID" value="NM_001078957.1"/>
</dbReference>
<dbReference type="SMR" id="Q0V9A9"/>
<dbReference type="FunCoup" id="Q0V9A9">
    <property type="interactions" value="1058"/>
</dbReference>
<dbReference type="STRING" id="8364.ENSXETP00000000488"/>
<dbReference type="DNASU" id="779879"/>
<dbReference type="GeneID" id="779879"/>
<dbReference type="KEGG" id="xtr:779879"/>
<dbReference type="AGR" id="Xenbase:XB-GENE-954710"/>
<dbReference type="CTD" id="51110"/>
<dbReference type="Xenbase" id="XB-GENE-954710">
    <property type="gene designation" value="lactb2"/>
</dbReference>
<dbReference type="InParanoid" id="Q0V9A9"/>
<dbReference type="OrthoDB" id="17458at2759"/>
<dbReference type="Proteomes" id="UP000008143">
    <property type="component" value="Chromosome 6"/>
</dbReference>
<dbReference type="GO" id="GO:0005759">
    <property type="term" value="C:mitochondrial matrix"/>
    <property type="evidence" value="ECO:0000250"/>
    <property type="project" value="UniProtKB"/>
</dbReference>
<dbReference type="GO" id="GO:0004521">
    <property type="term" value="F:RNA endonuclease activity"/>
    <property type="evidence" value="ECO:0000250"/>
    <property type="project" value="UniProtKB"/>
</dbReference>
<dbReference type="GO" id="GO:0003727">
    <property type="term" value="F:single-stranded RNA binding"/>
    <property type="evidence" value="ECO:0000250"/>
    <property type="project" value="UniProtKB"/>
</dbReference>
<dbReference type="GO" id="GO:0008270">
    <property type="term" value="F:zinc ion binding"/>
    <property type="evidence" value="ECO:0000250"/>
    <property type="project" value="UniProtKB"/>
</dbReference>
<dbReference type="CDD" id="cd07722">
    <property type="entry name" value="LACTB2-like_MBL-fold"/>
    <property type="match status" value="1"/>
</dbReference>
<dbReference type="FunFam" id="1.10.10.10:FF:000328">
    <property type="entry name" value="Lactamase beta 2"/>
    <property type="match status" value="1"/>
</dbReference>
<dbReference type="FunFam" id="3.60.15.10:FF:000017">
    <property type="entry name" value="Lactamase beta 2"/>
    <property type="match status" value="1"/>
</dbReference>
<dbReference type="Gene3D" id="3.60.15.10">
    <property type="entry name" value="Ribonuclease Z/Hydroxyacylglutathione hydrolase-like"/>
    <property type="match status" value="1"/>
</dbReference>
<dbReference type="Gene3D" id="1.10.10.10">
    <property type="entry name" value="Winged helix-like DNA-binding domain superfamily/Winged helix DNA-binding domain"/>
    <property type="match status" value="1"/>
</dbReference>
<dbReference type="InterPro" id="IPR047921">
    <property type="entry name" value="LACTB2-like_MBL-fold"/>
</dbReference>
<dbReference type="InterPro" id="IPR041516">
    <property type="entry name" value="LACTB2_WH"/>
</dbReference>
<dbReference type="InterPro" id="IPR001279">
    <property type="entry name" value="Metallo-B-lactamas"/>
</dbReference>
<dbReference type="InterPro" id="IPR036866">
    <property type="entry name" value="RibonucZ/Hydroxyglut_hydro"/>
</dbReference>
<dbReference type="InterPro" id="IPR050662">
    <property type="entry name" value="Sec-metab_biosynth-thioest"/>
</dbReference>
<dbReference type="InterPro" id="IPR036388">
    <property type="entry name" value="WH-like_DNA-bd_sf"/>
</dbReference>
<dbReference type="PANTHER" id="PTHR23131">
    <property type="entry name" value="ENDORIBONUCLEASE LACTB2"/>
    <property type="match status" value="1"/>
</dbReference>
<dbReference type="PANTHER" id="PTHR23131:SF0">
    <property type="entry name" value="ENDORIBONUCLEASE LACTB2"/>
    <property type="match status" value="1"/>
</dbReference>
<dbReference type="Pfam" id="PF17778">
    <property type="entry name" value="BLACT_WH"/>
    <property type="match status" value="1"/>
</dbReference>
<dbReference type="Pfam" id="PF00753">
    <property type="entry name" value="Lactamase_B"/>
    <property type="match status" value="1"/>
</dbReference>
<dbReference type="SMART" id="SM00849">
    <property type="entry name" value="Lactamase_B"/>
    <property type="match status" value="1"/>
</dbReference>
<dbReference type="SUPFAM" id="SSF56281">
    <property type="entry name" value="Metallo-hydrolase/oxidoreductase"/>
    <property type="match status" value="1"/>
</dbReference>
<reference key="1">
    <citation type="submission" date="2006-08" db="EMBL/GenBank/DDBJ databases">
        <authorList>
            <consortium name="NIH - Xenopus Gene Collection (XGC) project"/>
        </authorList>
    </citation>
    <scope>NUCLEOTIDE SEQUENCE [LARGE SCALE MRNA]</scope>
    <source>
        <strain>N6</strain>
        <tissue>Ovary</tissue>
    </source>
</reference>
<name>LACB2_XENTR</name>
<evidence type="ECO:0000250" key="1">
    <source>
        <dbReference type="UniProtKB" id="Q53H82"/>
    </source>
</evidence>
<evidence type="ECO:0000305" key="2"/>
<keyword id="KW-0255">Endonuclease</keyword>
<keyword id="KW-0378">Hydrolase</keyword>
<keyword id="KW-0479">Metal-binding</keyword>
<keyword id="KW-0496">Mitochondrion</keyword>
<keyword id="KW-0540">Nuclease</keyword>
<keyword id="KW-1185">Reference proteome</keyword>
<keyword id="KW-0694">RNA-binding</keyword>
<keyword id="KW-0862">Zinc</keyword>
<sequence length="289" mass="32420">MALSVLPRLEQLSARVVRVLGCNPGPMTLQGTNTYLVGTGPRRILIDTGEPAVPEYISCLKQALTEFNTSIQEIIVTHWHVDHVGGIADICTDIMNGCNFSVSKLPRNPHQEEVIGAVEHKYNYLKDGDIITTEGATLRVLYTPGHTDDHMALELLEENAIFSGDCILGEGTAVFEDLYDYMKSLEKLLEMKADKIYPGHGPVVLGARAKIQEYISHRHAREQQILQALQENSGRSFTSMDLVKIVYKDTPEYLHKAAEFNLTHHLQKLKKEGKISEEQSPTVRWRSNL</sequence>
<proteinExistence type="evidence at transcript level"/>
<organism>
    <name type="scientific">Xenopus tropicalis</name>
    <name type="common">Western clawed frog</name>
    <name type="synonym">Silurana tropicalis</name>
    <dbReference type="NCBI Taxonomy" id="8364"/>
    <lineage>
        <taxon>Eukaryota</taxon>
        <taxon>Metazoa</taxon>
        <taxon>Chordata</taxon>
        <taxon>Craniata</taxon>
        <taxon>Vertebrata</taxon>
        <taxon>Euteleostomi</taxon>
        <taxon>Amphibia</taxon>
        <taxon>Batrachia</taxon>
        <taxon>Anura</taxon>
        <taxon>Pipoidea</taxon>
        <taxon>Pipidae</taxon>
        <taxon>Xenopodinae</taxon>
        <taxon>Xenopus</taxon>
        <taxon>Silurana</taxon>
    </lineage>
</organism>
<feature type="chain" id="PRO_0000315748" description="Endoribonuclease LACTB2">
    <location>
        <begin position="1"/>
        <end position="289"/>
    </location>
</feature>
<feature type="binding site" evidence="1">
    <location>
        <position position="78"/>
    </location>
    <ligand>
        <name>Zn(2+)</name>
        <dbReference type="ChEBI" id="CHEBI:29105"/>
        <label>1</label>
    </ligand>
</feature>
<feature type="binding site" evidence="1">
    <location>
        <position position="80"/>
    </location>
    <ligand>
        <name>Zn(2+)</name>
        <dbReference type="ChEBI" id="CHEBI:29105"/>
        <label>1</label>
    </ligand>
</feature>
<feature type="binding site" evidence="1">
    <location>
        <position position="82"/>
    </location>
    <ligand>
        <name>Zn(2+)</name>
        <dbReference type="ChEBI" id="CHEBI:29105"/>
        <label>2</label>
    </ligand>
</feature>
<feature type="binding site" evidence="1">
    <location>
        <position position="83"/>
    </location>
    <ligand>
        <name>Zn(2+)</name>
        <dbReference type="ChEBI" id="CHEBI:29105"/>
        <label>2</label>
    </ligand>
</feature>
<feature type="binding site" evidence="1">
    <location>
        <position position="119"/>
    </location>
    <ligand>
        <name>Zn(2+)</name>
        <dbReference type="ChEBI" id="CHEBI:29105"/>
        <label>1</label>
    </ligand>
</feature>
<feature type="binding site" evidence="1">
    <location>
        <position position="119"/>
    </location>
    <ligand>
        <name>Zn(2+)</name>
        <dbReference type="ChEBI" id="CHEBI:29105"/>
        <label>2</label>
    </ligand>
</feature>
<feature type="binding site" evidence="1">
    <location>
        <position position="146"/>
    </location>
    <ligand>
        <name>Zn(2+)</name>
        <dbReference type="ChEBI" id="CHEBI:29105"/>
        <label>1</label>
    </ligand>
</feature>
<feature type="binding site" evidence="1">
    <location>
        <position position="165"/>
    </location>
    <ligand>
        <name>Zn(2+)</name>
        <dbReference type="ChEBI" id="CHEBI:29105"/>
        <label>1</label>
    </ligand>
</feature>
<feature type="binding site" evidence="1">
    <location>
        <position position="165"/>
    </location>
    <ligand>
        <name>Zn(2+)</name>
        <dbReference type="ChEBI" id="CHEBI:29105"/>
        <label>2</label>
    </ligand>
</feature>
<feature type="binding site" evidence="1">
    <location>
        <position position="200"/>
    </location>
    <ligand>
        <name>Zn(2+)</name>
        <dbReference type="ChEBI" id="CHEBI:29105"/>
        <label>2</label>
    </ligand>
</feature>
<accession>Q0V9A9</accession>
<comment type="function">
    <text evidence="1">Endoribonuclease; cleaves preferentially 3' to purine-pyrimidine dinucleotide motifs in single-stranded RNA. The cleavage product contains a free 3' -OH group. Has no activity with double-stranded RNA or DNA. Required for normal mitochondrial function and cell viability.</text>
</comment>
<comment type="cofactor">
    <cofactor evidence="1">
        <name>Zn(2+)</name>
        <dbReference type="ChEBI" id="CHEBI:29105"/>
    </cofactor>
    <text evidence="1">Binds 2 Zn(2+) ions per subunit.</text>
</comment>
<comment type="subcellular location">
    <subcellularLocation>
        <location evidence="1">Mitochondrion matrix</location>
    </subcellularLocation>
</comment>
<comment type="similarity">
    <text evidence="2">Belongs to the metallo-beta-lactamase superfamily. Glyoxalase II family.</text>
</comment>
<protein>
    <recommendedName>
        <fullName evidence="1">Endoribonuclease LACTB2</fullName>
    </recommendedName>
    <alternativeName>
        <fullName>Beta-lactamase-like protein 2</fullName>
        <ecNumber evidence="1">3.1.27.-</ecNumber>
    </alternativeName>
</protein>
<gene>
    <name type="primary">lactb2</name>
</gene>